<evidence type="ECO:0000255" key="1">
    <source>
        <dbReference type="HAMAP-Rule" id="MF_00402"/>
    </source>
</evidence>
<evidence type="ECO:0000305" key="2"/>
<name>RL19_SHESA</name>
<accession>A0KZM0</accession>
<keyword id="KW-0687">Ribonucleoprotein</keyword>
<keyword id="KW-0689">Ribosomal protein</keyword>
<reference key="1">
    <citation type="submission" date="2006-09" db="EMBL/GenBank/DDBJ databases">
        <title>Complete sequence of chromosome 1 of Shewanella sp. ANA-3.</title>
        <authorList>
            <person name="Copeland A."/>
            <person name="Lucas S."/>
            <person name="Lapidus A."/>
            <person name="Barry K."/>
            <person name="Detter J.C."/>
            <person name="Glavina del Rio T."/>
            <person name="Hammon N."/>
            <person name="Israni S."/>
            <person name="Dalin E."/>
            <person name="Tice H."/>
            <person name="Pitluck S."/>
            <person name="Chertkov O."/>
            <person name="Brettin T."/>
            <person name="Bruce D."/>
            <person name="Han C."/>
            <person name="Tapia R."/>
            <person name="Gilna P."/>
            <person name="Schmutz J."/>
            <person name="Larimer F."/>
            <person name="Land M."/>
            <person name="Hauser L."/>
            <person name="Kyrpides N."/>
            <person name="Kim E."/>
            <person name="Newman D."/>
            <person name="Salticov C."/>
            <person name="Konstantinidis K."/>
            <person name="Klappenback J."/>
            <person name="Tiedje J."/>
            <person name="Richardson P."/>
        </authorList>
    </citation>
    <scope>NUCLEOTIDE SEQUENCE [LARGE SCALE GENOMIC DNA]</scope>
    <source>
        <strain>ANA-3</strain>
    </source>
</reference>
<proteinExistence type="inferred from homology"/>
<gene>
    <name evidence="1" type="primary">rplS</name>
    <name type="ordered locus">Shewana3_3014</name>
</gene>
<feature type="chain" id="PRO_1000049744" description="Large ribosomal subunit protein bL19">
    <location>
        <begin position="1"/>
        <end position="117"/>
    </location>
</feature>
<sequence length="117" mass="13292">MNNIIKMLNDEQMKQDVPAFGAGDTVVVQVRVKEGDKERLQAFEGVVIAKRNRGLHSAFTVRKISNGEGVERAFQTHSPLIASIEVKRRGRVRRAKLYYLRDRSGKSARIREKLATK</sequence>
<organism>
    <name type="scientific">Shewanella sp. (strain ANA-3)</name>
    <dbReference type="NCBI Taxonomy" id="94122"/>
    <lineage>
        <taxon>Bacteria</taxon>
        <taxon>Pseudomonadati</taxon>
        <taxon>Pseudomonadota</taxon>
        <taxon>Gammaproteobacteria</taxon>
        <taxon>Alteromonadales</taxon>
        <taxon>Shewanellaceae</taxon>
        <taxon>Shewanella</taxon>
    </lineage>
</organism>
<comment type="function">
    <text evidence="1">This protein is located at the 30S-50S ribosomal subunit interface and may play a role in the structure and function of the aminoacyl-tRNA binding site.</text>
</comment>
<comment type="similarity">
    <text evidence="1">Belongs to the bacterial ribosomal protein bL19 family.</text>
</comment>
<protein>
    <recommendedName>
        <fullName evidence="1">Large ribosomal subunit protein bL19</fullName>
    </recommendedName>
    <alternativeName>
        <fullName evidence="2">50S ribosomal protein L19</fullName>
    </alternativeName>
</protein>
<dbReference type="EMBL" id="CP000469">
    <property type="protein sequence ID" value="ABK49239.1"/>
    <property type="molecule type" value="Genomic_DNA"/>
</dbReference>
<dbReference type="RefSeq" id="WP_006080791.1">
    <property type="nucleotide sequence ID" value="NC_008577.1"/>
</dbReference>
<dbReference type="SMR" id="A0KZM0"/>
<dbReference type="STRING" id="94122.Shewana3_3014"/>
<dbReference type="GeneID" id="94728937"/>
<dbReference type="KEGG" id="shn:Shewana3_3014"/>
<dbReference type="eggNOG" id="COG0335">
    <property type="taxonomic scope" value="Bacteria"/>
</dbReference>
<dbReference type="HOGENOM" id="CLU_103507_2_2_6"/>
<dbReference type="OrthoDB" id="9803541at2"/>
<dbReference type="Proteomes" id="UP000002589">
    <property type="component" value="Chromosome"/>
</dbReference>
<dbReference type="GO" id="GO:0022625">
    <property type="term" value="C:cytosolic large ribosomal subunit"/>
    <property type="evidence" value="ECO:0007669"/>
    <property type="project" value="TreeGrafter"/>
</dbReference>
<dbReference type="GO" id="GO:0003735">
    <property type="term" value="F:structural constituent of ribosome"/>
    <property type="evidence" value="ECO:0007669"/>
    <property type="project" value="InterPro"/>
</dbReference>
<dbReference type="GO" id="GO:0006412">
    <property type="term" value="P:translation"/>
    <property type="evidence" value="ECO:0007669"/>
    <property type="project" value="UniProtKB-UniRule"/>
</dbReference>
<dbReference type="FunFam" id="2.30.30.790:FF:000001">
    <property type="entry name" value="50S ribosomal protein L19"/>
    <property type="match status" value="1"/>
</dbReference>
<dbReference type="Gene3D" id="2.30.30.790">
    <property type="match status" value="1"/>
</dbReference>
<dbReference type="HAMAP" id="MF_00402">
    <property type="entry name" value="Ribosomal_bL19"/>
    <property type="match status" value="1"/>
</dbReference>
<dbReference type="InterPro" id="IPR001857">
    <property type="entry name" value="Ribosomal_bL19"/>
</dbReference>
<dbReference type="InterPro" id="IPR018257">
    <property type="entry name" value="Ribosomal_bL19_CS"/>
</dbReference>
<dbReference type="InterPro" id="IPR038657">
    <property type="entry name" value="Ribosomal_bL19_sf"/>
</dbReference>
<dbReference type="InterPro" id="IPR008991">
    <property type="entry name" value="Translation_prot_SH3-like_sf"/>
</dbReference>
<dbReference type="NCBIfam" id="TIGR01024">
    <property type="entry name" value="rplS_bact"/>
    <property type="match status" value="1"/>
</dbReference>
<dbReference type="PANTHER" id="PTHR15680:SF9">
    <property type="entry name" value="LARGE RIBOSOMAL SUBUNIT PROTEIN BL19M"/>
    <property type="match status" value="1"/>
</dbReference>
<dbReference type="PANTHER" id="PTHR15680">
    <property type="entry name" value="RIBOSOMAL PROTEIN L19"/>
    <property type="match status" value="1"/>
</dbReference>
<dbReference type="Pfam" id="PF01245">
    <property type="entry name" value="Ribosomal_L19"/>
    <property type="match status" value="1"/>
</dbReference>
<dbReference type="PIRSF" id="PIRSF002191">
    <property type="entry name" value="Ribosomal_L19"/>
    <property type="match status" value="1"/>
</dbReference>
<dbReference type="PRINTS" id="PR00061">
    <property type="entry name" value="RIBOSOMALL19"/>
</dbReference>
<dbReference type="SUPFAM" id="SSF50104">
    <property type="entry name" value="Translation proteins SH3-like domain"/>
    <property type="match status" value="1"/>
</dbReference>
<dbReference type="PROSITE" id="PS01015">
    <property type="entry name" value="RIBOSOMAL_L19"/>
    <property type="match status" value="1"/>
</dbReference>